<proteinExistence type="inferred from homology"/>
<sequence>MSNRKYFGTDGIRGKVGESPITPDFVLKLGWAAGKVLARHGSRKIIIGKDTRISGYMLESALEAGLAAAGLSALFTGPMPTPAVAYLTRTFRAEAGIVISASHNPFYDNGIKFFSIDGTKLPDDVEEAIEAEMEKPLTCVESAELGKANRIVDAAGRYIEFCKGTFPSELSLNELKIVVDCANGATYHIAPSVLRELGATVITIGCEPDGMNINEECGATDVRLLQERVLAEGAHVGLAFDGDGDRLMMVDHLGNKVDGDQILYIIAREGLRQGQLKGGAVGTLMSNMGLQLALKDLGIPFVRAKVGDRYVLEAMQEKGWRIGAENSGHVILLDKTTTGDGIVAGLQVLTAMVRNHMSLHDLCSGMKLLPQILVNVRFSGEHNPLKSDEVEEVTRQVEKELGGRGRVLLRKSGTEPLIRVMVEGDAEESLIAEMANRIADAVKAAG</sequence>
<organism>
    <name type="scientific">Yersinia pseudotuberculosis serotype O:3 (strain YPIII)</name>
    <dbReference type="NCBI Taxonomy" id="502800"/>
    <lineage>
        <taxon>Bacteria</taxon>
        <taxon>Pseudomonadati</taxon>
        <taxon>Pseudomonadota</taxon>
        <taxon>Gammaproteobacteria</taxon>
        <taxon>Enterobacterales</taxon>
        <taxon>Yersiniaceae</taxon>
        <taxon>Yersinia</taxon>
    </lineage>
</organism>
<reference key="1">
    <citation type="submission" date="2008-02" db="EMBL/GenBank/DDBJ databases">
        <title>Complete sequence of Yersinia pseudotuberculosis YPIII.</title>
        <authorList>
            <consortium name="US DOE Joint Genome Institute"/>
            <person name="Copeland A."/>
            <person name="Lucas S."/>
            <person name="Lapidus A."/>
            <person name="Glavina del Rio T."/>
            <person name="Dalin E."/>
            <person name="Tice H."/>
            <person name="Bruce D."/>
            <person name="Goodwin L."/>
            <person name="Pitluck S."/>
            <person name="Munk A.C."/>
            <person name="Brettin T."/>
            <person name="Detter J.C."/>
            <person name="Han C."/>
            <person name="Tapia R."/>
            <person name="Schmutz J."/>
            <person name="Larimer F."/>
            <person name="Land M."/>
            <person name="Hauser L."/>
            <person name="Challacombe J.F."/>
            <person name="Green L."/>
            <person name="Lindler L.E."/>
            <person name="Nikolich M.P."/>
            <person name="Richardson P."/>
        </authorList>
    </citation>
    <scope>NUCLEOTIDE SEQUENCE [LARGE SCALE GENOMIC DNA]</scope>
    <source>
        <strain>YPIII</strain>
    </source>
</reference>
<name>GLMM_YERPY</name>
<feature type="chain" id="PRO_1000201158" description="Phosphoglucosamine mutase">
    <location>
        <begin position="1"/>
        <end position="446"/>
    </location>
</feature>
<feature type="active site" description="Phosphoserine intermediate" evidence="1">
    <location>
        <position position="102"/>
    </location>
</feature>
<feature type="binding site" description="via phosphate group" evidence="1">
    <location>
        <position position="102"/>
    </location>
    <ligand>
        <name>Mg(2+)</name>
        <dbReference type="ChEBI" id="CHEBI:18420"/>
    </ligand>
</feature>
<feature type="binding site" evidence="1">
    <location>
        <position position="241"/>
    </location>
    <ligand>
        <name>Mg(2+)</name>
        <dbReference type="ChEBI" id="CHEBI:18420"/>
    </ligand>
</feature>
<feature type="binding site" evidence="1">
    <location>
        <position position="243"/>
    </location>
    <ligand>
        <name>Mg(2+)</name>
        <dbReference type="ChEBI" id="CHEBI:18420"/>
    </ligand>
</feature>
<feature type="binding site" evidence="1">
    <location>
        <position position="245"/>
    </location>
    <ligand>
        <name>Mg(2+)</name>
        <dbReference type="ChEBI" id="CHEBI:18420"/>
    </ligand>
</feature>
<feature type="modified residue" description="Phosphoserine" evidence="1">
    <location>
        <position position="102"/>
    </location>
</feature>
<comment type="function">
    <text evidence="1">Catalyzes the conversion of glucosamine-6-phosphate to glucosamine-1-phosphate.</text>
</comment>
<comment type="catalytic activity">
    <reaction evidence="1">
        <text>alpha-D-glucosamine 1-phosphate = D-glucosamine 6-phosphate</text>
        <dbReference type="Rhea" id="RHEA:23424"/>
        <dbReference type="ChEBI" id="CHEBI:58516"/>
        <dbReference type="ChEBI" id="CHEBI:58725"/>
        <dbReference type="EC" id="5.4.2.10"/>
    </reaction>
</comment>
<comment type="cofactor">
    <cofactor evidence="1">
        <name>Mg(2+)</name>
        <dbReference type="ChEBI" id="CHEBI:18420"/>
    </cofactor>
    <text evidence="1">Binds 1 Mg(2+) ion per subunit.</text>
</comment>
<comment type="PTM">
    <text evidence="1">Activated by phosphorylation.</text>
</comment>
<comment type="similarity">
    <text evidence="1">Belongs to the phosphohexose mutase family.</text>
</comment>
<keyword id="KW-0413">Isomerase</keyword>
<keyword id="KW-0460">Magnesium</keyword>
<keyword id="KW-0479">Metal-binding</keyword>
<keyword id="KW-0597">Phosphoprotein</keyword>
<dbReference type="EC" id="5.4.2.10" evidence="1"/>
<dbReference type="EMBL" id="CP000950">
    <property type="protein sequence ID" value="ACA70001.1"/>
    <property type="molecule type" value="Genomic_DNA"/>
</dbReference>
<dbReference type="RefSeq" id="WP_002210189.1">
    <property type="nucleotide sequence ID" value="NZ_CP009792.1"/>
</dbReference>
<dbReference type="SMR" id="B1JMH4"/>
<dbReference type="GeneID" id="57975214"/>
<dbReference type="KEGG" id="ypy:YPK_3734"/>
<dbReference type="PATRIC" id="fig|502800.11.peg.82"/>
<dbReference type="GO" id="GO:0005829">
    <property type="term" value="C:cytosol"/>
    <property type="evidence" value="ECO:0007669"/>
    <property type="project" value="TreeGrafter"/>
</dbReference>
<dbReference type="GO" id="GO:0000287">
    <property type="term" value="F:magnesium ion binding"/>
    <property type="evidence" value="ECO:0007669"/>
    <property type="project" value="UniProtKB-UniRule"/>
</dbReference>
<dbReference type="GO" id="GO:0008966">
    <property type="term" value="F:phosphoglucosamine mutase activity"/>
    <property type="evidence" value="ECO:0007669"/>
    <property type="project" value="UniProtKB-UniRule"/>
</dbReference>
<dbReference type="GO" id="GO:0004615">
    <property type="term" value="F:phosphomannomutase activity"/>
    <property type="evidence" value="ECO:0007669"/>
    <property type="project" value="TreeGrafter"/>
</dbReference>
<dbReference type="GO" id="GO:0005975">
    <property type="term" value="P:carbohydrate metabolic process"/>
    <property type="evidence" value="ECO:0007669"/>
    <property type="project" value="InterPro"/>
</dbReference>
<dbReference type="GO" id="GO:0009252">
    <property type="term" value="P:peptidoglycan biosynthetic process"/>
    <property type="evidence" value="ECO:0007669"/>
    <property type="project" value="TreeGrafter"/>
</dbReference>
<dbReference type="GO" id="GO:0006048">
    <property type="term" value="P:UDP-N-acetylglucosamine biosynthetic process"/>
    <property type="evidence" value="ECO:0007669"/>
    <property type="project" value="TreeGrafter"/>
</dbReference>
<dbReference type="CDD" id="cd05802">
    <property type="entry name" value="GlmM"/>
    <property type="match status" value="1"/>
</dbReference>
<dbReference type="FunFam" id="3.30.310.50:FF:000001">
    <property type="entry name" value="Phosphoglucosamine mutase"/>
    <property type="match status" value="1"/>
</dbReference>
<dbReference type="FunFam" id="3.40.120.10:FF:000001">
    <property type="entry name" value="Phosphoglucosamine mutase"/>
    <property type="match status" value="1"/>
</dbReference>
<dbReference type="FunFam" id="3.40.120.10:FF:000002">
    <property type="entry name" value="Phosphoglucosamine mutase"/>
    <property type="match status" value="1"/>
</dbReference>
<dbReference type="Gene3D" id="3.40.120.10">
    <property type="entry name" value="Alpha-D-Glucose-1,6-Bisphosphate, subunit A, domain 3"/>
    <property type="match status" value="3"/>
</dbReference>
<dbReference type="Gene3D" id="3.30.310.50">
    <property type="entry name" value="Alpha-D-phosphohexomutase, C-terminal domain"/>
    <property type="match status" value="1"/>
</dbReference>
<dbReference type="HAMAP" id="MF_01554_B">
    <property type="entry name" value="GlmM_B"/>
    <property type="match status" value="1"/>
</dbReference>
<dbReference type="InterPro" id="IPR005844">
    <property type="entry name" value="A-D-PHexomutase_a/b/a-I"/>
</dbReference>
<dbReference type="InterPro" id="IPR016055">
    <property type="entry name" value="A-D-PHexomutase_a/b/a-I/II/III"/>
</dbReference>
<dbReference type="InterPro" id="IPR005845">
    <property type="entry name" value="A-D-PHexomutase_a/b/a-II"/>
</dbReference>
<dbReference type="InterPro" id="IPR005846">
    <property type="entry name" value="A-D-PHexomutase_a/b/a-III"/>
</dbReference>
<dbReference type="InterPro" id="IPR005843">
    <property type="entry name" value="A-D-PHexomutase_C"/>
</dbReference>
<dbReference type="InterPro" id="IPR036900">
    <property type="entry name" value="A-D-PHexomutase_C_sf"/>
</dbReference>
<dbReference type="InterPro" id="IPR016066">
    <property type="entry name" value="A-D-PHexomutase_CS"/>
</dbReference>
<dbReference type="InterPro" id="IPR005841">
    <property type="entry name" value="Alpha-D-phosphohexomutase_SF"/>
</dbReference>
<dbReference type="InterPro" id="IPR006352">
    <property type="entry name" value="GlmM_bact"/>
</dbReference>
<dbReference type="InterPro" id="IPR050060">
    <property type="entry name" value="Phosphoglucosamine_mutase"/>
</dbReference>
<dbReference type="NCBIfam" id="TIGR01455">
    <property type="entry name" value="glmM"/>
    <property type="match status" value="1"/>
</dbReference>
<dbReference type="NCBIfam" id="NF008139">
    <property type="entry name" value="PRK10887.1"/>
    <property type="match status" value="1"/>
</dbReference>
<dbReference type="PANTHER" id="PTHR42946:SF1">
    <property type="entry name" value="PHOSPHOGLUCOMUTASE (ALPHA-D-GLUCOSE-1,6-BISPHOSPHATE-DEPENDENT)"/>
    <property type="match status" value="1"/>
</dbReference>
<dbReference type="PANTHER" id="PTHR42946">
    <property type="entry name" value="PHOSPHOHEXOSE MUTASE"/>
    <property type="match status" value="1"/>
</dbReference>
<dbReference type="Pfam" id="PF02878">
    <property type="entry name" value="PGM_PMM_I"/>
    <property type="match status" value="1"/>
</dbReference>
<dbReference type="Pfam" id="PF02879">
    <property type="entry name" value="PGM_PMM_II"/>
    <property type="match status" value="1"/>
</dbReference>
<dbReference type="Pfam" id="PF02880">
    <property type="entry name" value="PGM_PMM_III"/>
    <property type="match status" value="1"/>
</dbReference>
<dbReference type="Pfam" id="PF00408">
    <property type="entry name" value="PGM_PMM_IV"/>
    <property type="match status" value="1"/>
</dbReference>
<dbReference type="PRINTS" id="PR00509">
    <property type="entry name" value="PGMPMM"/>
</dbReference>
<dbReference type="SUPFAM" id="SSF55957">
    <property type="entry name" value="Phosphoglucomutase, C-terminal domain"/>
    <property type="match status" value="1"/>
</dbReference>
<dbReference type="SUPFAM" id="SSF53738">
    <property type="entry name" value="Phosphoglucomutase, first 3 domains"/>
    <property type="match status" value="3"/>
</dbReference>
<dbReference type="PROSITE" id="PS00710">
    <property type="entry name" value="PGM_PMM"/>
    <property type="match status" value="1"/>
</dbReference>
<protein>
    <recommendedName>
        <fullName evidence="1">Phosphoglucosamine mutase</fullName>
        <ecNumber evidence="1">5.4.2.10</ecNumber>
    </recommendedName>
</protein>
<evidence type="ECO:0000255" key="1">
    <source>
        <dbReference type="HAMAP-Rule" id="MF_01554"/>
    </source>
</evidence>
<accession>B1JMH4</accession>
<gene>
    <name evidence="1" type="primary">glmM</name>
    <name type="ordered locus">YPK_3734</name>
</gene>